<keyword id="KW-0270">Exopolysaccharide synthesis</keyword>
<keyword id="KW-1185">Reference proteome</keyword>
<keyword id="KW-0808">Transferase</keyword>
<protein>
    <recommendedName>
        <fullName>Exopolysaccharide phosphotransferase NFA_48680</fullName>
        <ecNumber>2.7.-.-</ecNumber>
    </recommendedName>
    <alternativeName>
        <fullName>Stealth protein</fullName>
    </alternativeName>
</protein>
<proteinExistence type="inferred from homology"/>
<name>Y4868_NOCFA</name>
<organism>
    <name type="scientific">Nocardia farcinica (strain IFM 10152)</name>
    <dbReference type="NCBI Taxonomy" id="247156"/>
    <lineage>
        <taxon>Bacteria</taxon>
        <taxon>Bacillati</taxon>
        <taxon>Actinomycetota</taxon>
        <taxon>Actinomycetes</taxon>
        <taxon>Mycobacteriales</taxon>
        <taxon>Nocardiaceae</taxon>
        <taxon>Nocardia</taxon>
    </lineage>
</organism>
<gene>
    <name type="ordered locus">NFA_48680</name>
</gene>
<dbReference type="EC" id="2.7.-.-"/>
<dbReference type="EMBL" id="AP006618">
    <property type="protein sequence ID" value="BAD59720.1"/>
    <property type="molecule type" value="Genomic_DNA"/>
</dbReference>
<dbReference type="SMR" id="Q5YQ21"/>
<dbReference type="STRING" id="247156.NFA_48680"/>
<dbReference type="KEGG" id="nfa:NFA_48680"/>
<dbReference type="eggNOG" id="COG0438">
    <property type="taxonomic scope" value="Bacteria"/>
</dbReference>
<dbReference type="HOGENOM" id="CLU_033996_0_0_11"/>
<dbReference type="OrthoDB" id="9776077at2"/>
<dbReference type="Proteomes" id="UP000006820">
    <property type="component" value="Chromosome"/>
</dbReference>
<dbReference type="GO" id="GO:0016772">
    <property type="term" value="F:transferase activity, transferring phosphorus-containing groups"/>
    <property type="evidence" value="ECO:0007669"/>
    <property type="project" value="InterPro"/>
</dbReference>
<dbReference type="GO" id="GO:0000271">
    <property type="term" value="P:polysaccharide biosynthetic process"/>
    <property type="evidence" value="ECO:0007669"/>
    <property type="project" value="UniProtKB-KW"/>
</dbReference>
<dbReference type="InterPro" id="IPR047141">
    <property type="entry name" value="Stealth"/>
</dbReference>
<dbReference type="InterPro" id="IPR031358">
    <property type="entry name" value="Stealth_CR1"/>
</dbReference>
<dbReference type="InterPro" id="IPR021520">
    <property type="entry name" value="Stealth_CR2"/>
</dbReference>
<dbReference type="InterPro" id="IPR031357">
    <property type="entry name" value="Stealth_CR3"/>
</dbReference>
<dbReference type="InterPro" id="IPR031356">
    <property type="entry name" value="Stealth_CR4"/>
</dbReference>
<dbReference type="PANTHER" id="PTHR24045">
    <property type="match status" value="1"/>
</dbReference>
<dbReference type="PANTHER" id="PTHR24045:SF0">
    <property type="entry name" value="N-ACETYLGLUCOSAMINE-1-PHOSPHOTRANSFERASE SUBUNITS ALPHA_BETA"/>
    <property type="match status" value="1"/>
</dbReference>
<dbReference type="Pfam" id="PF17101">
    <property type="entry name" value="Stealth_CR1"/>
    <property type="match status" value="1"/>
</dbReference>
<dbReference type="Pfam" id="PF11380">
    <property type="entry name" value="Stealth_CR2"/>
    <property type="match status" value="1"/>
</dbReference>
<dbReference type="Pfam" id="PF17102">
    <property type="entry name" value="Stealth_CR3"/>
    <property type="match status" value="1"/>
</dbReference>
<dbReference type="Pfam" id="PF17103">
    <property type="entry name" value="Stealth_CR4"/>
    <property type="match status" value="1"/>
</dbReference>
<evidence type="ECO:0000256" key="1">
    <source>
        <dbReference type="SAM" id="MobiDB-lite"/>
    </source>
</evidence>
<evidence type="ECO:0000305" key="2"/>
<reference key="1">
    <citation type="journal article" date="2004" name="Proc. Natl. Acad. Sci. U.S.A.">
        <title>The complete genomic sequence of Nocardia farcinica IFM 10152.</title>
        <authorList>
            <person name="Ishikawa J."/>
            <person name="Yamashita A."/>
            <person name="Mikami Y."/>
            <person name="Hoshino Y."/>
            <person name="Kurita H."/>
            <person name="Hotta K."/>
            <person name="Shiba T."/>
            <person name="Hattori M."/>
        </authorList>
    </citation>
    <scope>NUCLEOTIDE SEQUENCE [LARGE SCALE GENOMIC DNA]</scope>
    <source>
        <strain>IFM 10152</strain>
    </source>
</reference>
<reference key="2">
    <citation type="journal article" date="2005" name="PLoS Comput. Biol.">
        <title>Stealth proteins: in silico identification of a novel protein family rendering bacterial pathogens invisible to host immune defense.</title>
        <authorList>
            <person name="Sperisen P."/>
            <person name="Schmid C.D."/>
            <person name="Bucher P."/>
            <person name="Zilian O."/>
        </authorList>
    </citation>
    <scope>IDENTIFICATION AS A STEALTH PROTEIN</scope>
    <scope>PREDICTION OF FUNCTION</scope>
</reference>
<comment type="miscellaneous">
    <text>Stealth proteins are part of a protein family that is conserved from bacteria to higher eukaryotes. Family members were first identified in microbes as proteins that help pathogens to elude the host innate immune system. Microbial stealth proteins are involved in the biosynthesis of exopolysaccharides. Stealth proteins are predicted to function as hexose-1-phosphoryltransferases.</text>
</comment>
<comment type="similarity">
    <text evidence="2">Belongs to the stealth family.</text>
</comment>
<feature type="chain" id="PRO_0000235958" description="Exopolysaccharide phosphotransferase NFA_48680">
    <location>
        <begin position="1"/>
        <end position="506"/>
    </location>
</feature>
<feature type="region of interest" description="Disordered" evidence="1">
    <location>
        <begin position="484"/>
        <end position="506"/>
    </location>
</feature>
<accession>Q5YQ21</accession>
<sequence>MRARCGRILSDSERVEADMDTGMGGMDFGTVDAVAGQVAGNLAVSEATIADLGYLRAQLAAAEVPFLLVRDRDHRLVLAADAAHRAMVRRVTAAAAAAGFVCTQPQPDVVRLGRDRDPAHHVELELWEYHGDTVECPRPNALTRTVFDLADVEFTEVRLFDRSWPTLAQMFAPQPTDVGFDIDIVFSWVDGSDPEFRARRAGMMAQVVVGEGDDADARIRQIDELKYALRSVHKNAPWIRRIFIATDSPAPAWLAEHPKVTIVRAIDHFSDTSGLPTFNSHAVESQLQHIEGLSEHFLYSNDDMFFARPVRPSMFFTPAGISRFIEADVRIGPGRNNERRSGYENAARVNRALLAERFGHVITRHLEHTPVPLRRSVLREMEEEFAADFARTRTSRFRAATDISVTNSLYHYYALLTGRAVPQEAARVAYVDTTSRAGLAVLDDIAAHRDLDFFCLNDGSFPEISESERVREVSRFLAGYFPDPAPWERVSAPSRRPLPESTAGAA</sequence>